<sequence length="59" mass="6471">MSADVKVTLVRSHIGKASSVKAVLVGMGLTKRQKSVTLKDTPEVRGMINKVRHLLKVEE</sequence>
<accession>A5GAW0</accession>
<gene>
    <name evidence="1" type="primary">rpmD</name>
    <name type="ordered locus">Gura_1084</name>
</gene>
<proteinExistence type="inferred from homology"/>
<name>RL30_GEOUR</name>
<dbReference type="EMBL" id="CP000698">
    <property type="protein sequence ID" value="ABQ25290.1"/>
    <property type="molecule type" value="Genomic_DNA"/>
</dbReference>
<dbReference type="RefSeq" id="WP_011938012.1">
    <property type="nucleotide sequence ID" value="NC_009483.1"/>
</dbReference>
<dbReference type="SMR" id="A5GAW0"/>
<dbReference type="STRING" id="351605.Gura_1084"/>
<dbReference type="KEGG" id="gur:Gura_1084"/>
<dbReference type="HOGENOM" id="CLU_131047_1_4_7"/>
<dbReference type="OrthoDB" id="9812790at2"/>
<dbReference type="Proteomes" id="UP000006695">
    <property type="component" value="Chromosome"/>
</dbReference>
<dbReference type="GO" id="GO:0022625">
    <property type="term" value="C:cytosolic large ribosomal subunit"/>
    <property type="evidence" value="ECO:0007669"/>
    <property type="project" value="TreeGrafter"/>
</dbReference>
<dbReference type="GO" id="GO:0003735">
    <property type="term" value="F:structural constituent of ribosome"/>
    <property type="evidence" value="ECO:0007669"/>
    <property type="project" value="InterPro"/>
</dbReference>
<dbReference type="GO" id="GO:0006412">
    <property type="term" value="P:translation"/>
    <property type="evidence" value="ECO:0007669"/>
    <property type="project" value="InterPro"/>
</dbReference>
<dbReference type="CDD" id="cd01658">
    <property type="entry name" value="Ribosomal_L30"/>
    <property type="match status" value="1"/>
</dbReference>
<dbReference type="Gene3D" id="3.30.1390.20">
    <property type="entry name" value="Ribosomal protein L30, ferredoxin-like fold domain"/>
    <property type="match status" value="1"/>
</dbReference>
<dbReference type="HAMAP" id="MF_01371_B">
    <property type="entry name" value="Ribosomal_uL30_B"/>
    <property type="match status" value="1"/>
</dbReference>
<dbReference type="InterPro" id="IPR036919">
    <property type="entry name" value="Ribo_uL30_ferredoxin-like_sf"/>
</dbReference>
<dbReference type="InterPro" id="IPR005996">
    <property type="entry name" value="Ribosomal_uL30_bac-type"/>
</dbReference>
<dbReference type="InterPro" id="IPR016082">
    <property type="entry name" value="Ribosomal_uL30_ferredoxin-like"/>
</dbReference>
<dbReference type="NCBIfam" id="TIGR01308">
    <property type="entry name" value="rpmD_bact"/>
    <property type="match status" value="1"/>
</dbReference>
<dbReference type="PANTHER" id="PTHR15892:SF2">
    <property type="entry name" value="LARGE RIBOSOMAL SUBUNIT PROTEIN UL30M"/>
    <property type="match status" value="1"/>
</dbReference>
<dbReference type="PANTHER" id="PTHR15892">
    <property type="entry name" value="MITOCHONDRIAL RIBOSOMAL PROTEIN L30"/>
    <property type="match status" value="1"/>
</dbReference>
<dbReference type="Pfam" id="PF00327">
    <property type="entry name" value="Ribosomal_L30"/>
    <property type="match status" value="1"/>
</dbReference>
<dbReference type="PIRSF" id="PIRSF002211">
    <property type="entry name" value="Ribosomal_L30_bac-type"/>
    <property type="match status" value="1"/>
</dbReference>
<dbReference type="SUPFAM" id="SSF55129">
    <property type="entry name" value="Ribosomal protein L30p/L7e"/>
    <property type="match status" value="1"/>
</dbReference>
<reference key="1">
    <citation type="submission" date="2007-05" db="EMBL/GenBank/DDBJ databases">
        <title>Complete sequence of Geobacter uraniireducens Rf4.</title>
        <authorList>
            <consortium name="US DOE Joint Genome Institute"/>
            <person name="Copeland A."/>
            <person name="Lucas S."/>
            <person name="Lapidus A."/>
            <person name="Barry K."/>
            <person name="Detter J.C."/>
            <person name="Glavina del Rio T."/>
            <person name="Hammon N."/>
            <person name="Israni S."/>
            <person name="Dalin E."/>
            <person name="Tice H."/>
            <person name="Pitluck S."/>
            <person name="Chertkov O."/>
            <person name="Brettin T."/>
            <person name="Bruce D."/>
            <person name="Han C."/>
            <person name="Schmutz J."/>
            <person name="Larimer F."/>
            <person name="Land M."/>
            <person name="Hauser L."/>
            <person name="Kyrpides N."/>
            <person name="Mikhailova N."/>
            <person name="Shelobolina E."/>
            <person name="Aklujkar M."/>
            <person name="Lovley D."/>
            <person name="Richardson P."/>
        </authorList>
    </citation>
    <scope>NUCLEOTIDE SEQUENCE [LARGE SCALE GENOMIC DNA]</scope>
    <source>
        <strain>ATCC BAA-1134 / JCM 13001 / Rf4</strain>
    </source>
</reference>
<organism>
    <name type="scientific">Geotalea uraniireducens (strain Rf4)</name>
    <name type="common">Geobacter uraniireducens</name>
    <dbReference type="NCBI Taxonomy" id="351605"/>
    <lineage>
        <taxon>Bacteria</taxon>
        <taxon>Pseudomonadati</taxon>
        <taxon>Thermodesulfobacteriota</taxon>
        <taxon>Desulfuromonadia</taxon>
        <taxon>Geobacterales</taxon>
        <taxon>Geobacteraceae</taxon>
        <taxon>Geotalea</taxon>
    </lineage>
</organism>
<keyword id="KW-1185">Reference proteome</keyword>
<keyword id="KW-0687">Ribonucleoprotein</keyword>
<keyword id="KW-0689">Ribosomal protein</keyword>
<protein>
    <recommendedName>
        <fullName evidence="1">Large ribosomal subunit protein uL30</fullName>
    </recommendedName>
    <alternativeName>
        <fullName evidence="2">50S ribosomal protein L30</fullName>
    </alternativeName>
</protein>
<feature type="chain" id="PRO_1000087253" description="Large ribosomal subunit protein uL30">
    <location>
        <begin position="1"/>
        <end position="59"/>
    </location>
</feature>
<comment type="subunit">
    <text evidence="1">Part of the 50S ribosomal subunit.</text>
</comment>
<comment type="similarity">
    <text evidence="1">Belongs to the universal ribosomal protein uL30 family.</text>
</comment>
<evidence type="ECO:0000255" key="1">
    <source>
        <dbReference type="HAMAP-Rule" id="MF_01371"/>
    </source>
</evidence>
<evidence type="ECO:0000305" key="2"/>